<sequence>MNLSQDSSAHHQSQDYAGVSDDEDEIDILGEDDPCSPRSHIYQQPTDSDMGDRGVLSPSKLSCNESASHSSGERERGTSKHSLDTTTNGKVKRALVKPPYSYIALITIAIMQSPHKKLTLSGICDFISSKFPYYKDKFPAWQNSIRHNLSLNDCFIKIPREPGNPGKGNYWTLDPASKDMFDNGSFLRRRKRFKRQHQELFKDGLVMYNPLHYCTPNSALQAQQIPMTCLAIPENFAMPNHLVPYPDINITVPCPDQGVHRVLTAQDVDNHPSNSHSKCSFSIENIMGETKEPEKHLTSFNQNWNYNHLLQSSRLCLLPSGSHLANAHHSAQCNLIKFPGCY</sequence>
<name>FXD5C_XENLA</name>
<reference evidence="7 8" key="1">
    <citation type="journal article" date="1999" name="Mech. Dev.">
        <title>Characterization of a subfamily of related winged helix genes, XFD-12/12'/12'' (XFLIP), during Xenopus embryogenesis.</title>
        <authorList>
            <person name="Soelter M."/>
            <person name="Koester M."/>
            <person name="Hollemann T."/>
            <person name="Brey A."/>
            <person name="Pieler T."/>
            <person name="Knoechel W."/>
        </authorList>
    </citation>
    <scope>NUCLEOTIDE SEQUENCE [MRNA]</scope>
    <scope>TISSUE SPECIFICITY</scope>
    <scope>DEVELOPMENTAL STAGE</scope>
    <source>
        <tissue evidence="5">Gastrula</tissue>
    </source>
</reference>
<reference evidence="7" key="2">
    <citation type="journal article" date="2005" name="Gene">
        <title>Of fox and frogs: fox (fork head/winged helix) transcription factors in Xenopus development.</title>
        <authorList>
            <person name="Pohl B.S."/>
            <person name="Knoechel W."/>
        </authorList>
    </citation>
    <scope>REVIEW</scope>
</reference>
<evidence type="ECO:0000250" key="1">
    <source>
        <dbReference type="UniProtKB" id="Q9PRJ8"/>
    </source>
</evidence>
<evidence type="ECO:0000255" key="2"/>
<evidence type="ECO:0000255" key="3">
    <source>
        <dbReference type="PROSITE-ProRule" id="PRU00089"/>
    </source>
</evidence>
<evidence type="ECO:0000256" key="4">
    <source>
        <dbReference type="SAM" id="MobiDB-lite"/>
    </source>
</evidence>
<evidence type="ECO:0000269" key="5">
    <source>
    </source>
</evidence>
<evidence type="ECO:0000303" key="6">
    <source>
    </source>
</evidence>
<evidence type="ECO:0000305" key="7"/>
<evidence type="ECO:0000312" key="8">
    <source>
        <dbReference type="EMBL" id="CAB44730.1"/>
    </source>
</evidence>
<comment type="function">
    <text evidence="1">Transcriptional repressor.</text>
</comment>
<comment type="subcellular location">
    <subcellularLocation>
        <location evidence="2 7">Nucleus</location>
    </subcellularLocation>
</comment>
<comment type="tissue specificity">
    <text evidence="5">At the onset of gastrulation, expressed in the superficial layer of cells in the dorsal blastopore lip (Spemann organizer). In the open neural plate, expressed in a row of cells destined to become the floor plate of the neural tube. After neural tube closure, only detected in the tailtip and a small area located at the midbrain/hindbrain boundary.</text>
</comment>
<comment type="developmental stage">
    <text evidence="5">Expressed both maternally and zygotically. Maternal expression levels are low and become further reduced after fertilization. Zygotic expression begins at the mid-blastula transition and peaks during the gastrula/neurula stages. A lower level of expression is then maintained during tailbud and later stages.</text>
</comment>
<accession>Q9PT67</accession>
<feature type="chain" id="PRO_0000259617" description="Forkhead box protein D5-C">
    <location>
        <begin position="1"/>
        <end position="342"/>
    </location>
</feature>
<feature type="DNA-binding region" description="Fork-head" evidence="3">
    <location>
        <begin position="97"/>
        <end position="191"/>
    </location>
</feature>
<feature type="region of interest" description="Disordered" evidence="4">
    <location>
        <begin position="1"/>
        <end position="89"/>
    </location>
</feature>
<feature type="compositionally biased region" description="Acidic residues" evidence="4">
    <location>
        <begin position="20"/>
        <end position="34"/>
    </location>
</feature>
<feature type="compositionally biased region" description="Polar residues" evidence="4">
    <location>
        <begin position="59"/>
        <end position="70"/>
    </location>
</feature>
<feature type="compositionally biased region" description="Basic and acidic residues" evidence="4">
    <location>
        <begin position="71"/>
        <end position="83"/>
    </location>
</feature>
<proteinExistence type="evidence at transcript level"/>
<keyword id="KW-0238">DNA-binding</keyword>
<keyword id="KW-0539">Nucleus</keyword>
<keyword id="KW-1185">Reference proteome</keyword>
<keyword id="KW-0678">Repressor</keyword>
<keyword id="KW-0804">Transcription</keyword>
<keyword id="KW-0805">Transcription regulation</keyword>
<organism>
    <name type="scientific">Xenopus laevis</name>
    <name type="common">African clawed frog</name>
    <dbReference type="NCBI Taxonomy" id="8355"/>
    <lineage>
        <taxon>Eukaryota</taxon>
        <taxon>Metazoa</taxon>
        <taxon>Chordata</taxon>
        <taxon>Craniata</taxon>
        <taxon>Vertebrata</taxon>
        <taxon>Euteleostomi</taxon>
        <taxon>Amphibia</taxon>
        <taxon>Batrachia</taxon>
        <taxon>Anura</taxon>
        <taxon>Pipoidea</taxon>
        <taxon>Pipidae</taxon>
        <taxon>Xenopodinae</taxon>
        <taxon>Xenopus</taxon>
        <taxon>Xenopus</taxon>
    </lineage>
</organism>
<dbReference type="EMBL" id="AJ242678">
    <property type="protein sequence ID" value="CAB44730.1"/>
    <property type="molecule type" value="mRNA"/>
</dbReference>
<dbReference type="SMR" id="Q9PT67"/>
<dbReference type="GeneID" id="373630"/>
<dbReference type="KEGG" id="xla:373630"/>
<dbReference type="AGR" id="Xenbase:XB-GENE-6252884"/>
<dbReference type="CTD" id="373630"/>
<dbReference type="Xenbase" id="XB-GENE-6252884">
    <property type="gene designation" value="foxd4l1.2.L"/>
</dbReference>
<dbReference type="OMA" id="MYNPLHY"/>
<dbReference type="OrthoDB" id="341578at2759"/>
<dbReference type="Proteomes" id="UP000186698">
    <property type="component" value="Chromosome 1L"/>
</dbReference>
<dbReference type="Bgee" id="373630">
    <property type="expression patterns" value="Expressed in gastrula and 1 other cell type or tissue"/>
</dbReference>
<dbReference type="GO" id="GO:0005634">
    <property type="term" value="C:nucleus"/>
    <property type="evidence" value="ECO:0000250"/>
    <property type="project" value="UniProtKB"/>
</dbReference>
<dbReference type="GO" id="GO:0003677">
    <property type="term" value="F:DNA binding"/>
    <property type="evidence" value="ECO:0000303"/>
    <property type="project" value="UniProtKB"/>
</dbReference>
<dbReference type="GO" id="GO:0003700">
    <property type="term" value="F:DNA-binding transcription factor activity"/>
    <property type="evidence" value="ECO:0000303"/>
    <property type="project" value="UniProtKB"/>
</dbReference>
<dbReference type="GO" id="GO:0000981">
    <property type="term" value="F:DNA-binding transcription factor activity, RNA polymerase II-specific"/>
    <property type="evidence" value="ECO:0000318"/>
    <property type="project" value="GO_Central"/>
</dbReference>
<dbReference type="GO" id="GO:0000978">
    <property type="term" value="F:RNA polymerase II cis-regulatory region sequence-specific DNA binding"/>
    <property type="evidence" value="ECO:0000318"/>
    <property type="project" value="GO_Central"/>
</dbReference>
<dbReference type="GO" id="GO:0009653">
    <property type="term" value="P:anatomical structure morphogenesis"/>
    <property type="evidence" value="ECO:0000318"/>
    <property type="project" value="GO_Central"/>
</dbReference>
<dbReference type="GO" id="GO:0030154">
    <property type="term" value="P:cell differentiation"/>
    <property type="evidence" value="ECO:0000318"/>
    <property type="project" value="GO_Central"/>
</dbReference>
<dbReference type="GO" id="GO:0045892">
    <property type="term" value="P:negative regulation of DNA-templated transcription"/>
    <property type="evidence" value="ECO:0000250"/>
    <property type="project" value="UniProtKB"/>
</dbReference>
<dbReference type="GO" id="GO:0006355">
    <property type="term" value="P:regulation of DNA-templated transcription"/>
    <property type="evidence" value="ECO:0000303"/>
    <property type="project" value="UniProtKB"/>
</dbReference>
<dbReference type="GO" id="GO:0006357">
    <property type="term" value="P:regulation of transcription by RNA polymerase II"/>
    <property type="evidence" value="ECO:0000318"/>
    <property type="project" value="GO_Central"/>
</dbReference>
<dbReference type="CDD" id="cd20048">
    <property type="entry name" value="FH_FOXD4-like"/>
    <property type="match status" value="1"/>
</dbReference>
<dbReference type="FunFam" id="1.10.10.10:FF:000016">
    <property type="entry name" value="Forkhead box protein I1"/>
    <property type="match status" value="1"/>
</dbReference>
<dbReference type="Gene3D" id="1.10.10.10">
    <property type="entry name" value="Winged helix-like DNA-binding domain superfamily/Winged helix DNA-binding domain"/>
    <property type="match status" value="1"/>
</dbReference>
<dbReference type="InterPro" id="IPR001766">
    <property type="entry name" value="Fork_head_dom"/>
</dbReference>
<dbReference type="InterPro" id="IPR050211">
    <property type="entry name" value="FOX_domain-containing"/>
</dbReference>
<dbReference type="InterPro" id="IPR018122">
    <property type="entry name" value="TF_fork_head_CS_1"/>
</dbReference>
<dbReference type="InterPro" id="IPR030456">
    <property type="entry name" value="TF_fork_head_CS_2"/>
</dbReference>
<dbReference type="InterPro" id="IPR036388">
    <property type="entry name" value="WH-like_DNA-bd_sf"/>
</dbReference>
<dbReference type="InterPro" id="IPR036390">
    <property type="entry name" value="WH_DNA-bd_sf"/>
</dbReference>
<dbReference type="PANTHER" id="PTHR11829">
    <property type="entry name" value="FORKHEAD BOX PROTEIN"/>
    <property type="match status" value="1"/>
</dbReference>
<dbReference type="PANTHER" id="PTHR11829:SF361">
    <property type="entry name" value="FORKHEAD BOX PROTEIN D4-LIKE 1"/>
    <property type="match status" value="1"/>
</dbReference>
<dbReference type="Pfam" id="PF00250">
    <property type="entry name" value="Forkhead"/>
    <property type="match status" value="1"/>
</dbReference>
<dbReference type="PRINTS" id="PR00053">
    <property type="entry name" value="FORKHEAD"/>
</dbReference>
<dbReference type="SMART" id="SM00339">
    <property type="entry name" value="FH"/>
    <property type="match status" value="1"/>
</dbReference>
<dbReference type="SUPFAM" id="SSF46785">
    <property type="entry name" value="Winged helix' DNA-binding domain"/>
    <property type="match status" value="1"/>
</dbReference>
<dbReference type="PROSITE" id="PS00657">
    <property type="entry name" value="FORK_HEAD_1"/>
    <property type="match status" value="1"/>
</dbReference>
<dbReference type="PROSITE" id="PS00658">
    <property type="entry name" value="FORK_HEAD_2"/>
    <property type="match status" value="1"/>
</dbReference>
<dbReference type="PROSITE" id="PS50039">
    <property type="entry name" value="FORK_HEAD_3"/>
    <property type="match status" value="1"/>
</dbReference>
<gene>
    <name type="primary">foxd5-c</name>
    <name evidence="6" type="synonym">foxd5c</name>
</gene>
<protein>
    <recommendedName>
        <fullName>Forkhead box protein D5-C</fullName>
        <shortName>FoxD5-C</shortName>
        <shortName>FoxD5c</shortName>
    </recommendedName>
    <alternativeName>
        <fullName>Fork head domain-related protein 12''</fullName>
        <shortName>xFD-12''</shortName>
    </alternativeName>
    <alternativeName>
        <fullName>XlFoxD5c</fullName>
    </alternativeName>
</protein>